<keyword id="KW-0067">ATP-binding</keyword>
<keyword id="KW-0966">Cell projection</keyword>
<keyword id="KW-0969">Cilium</keyword>
<keyword id="KW-0963">Cytoplasm</keyword>
<keyword id="KW-0206">Cytoskeleton</keyword>
<keyword id="KW-0436">Ligase</keyword>
<keyword id="KW-0460">Magnesium</keyword>
<keyword id="KW-0479">Metal-binding</keyword>
<keyword id="KW-0493">Microtubule</keyword>
<keyword id="KW-0547">Nucleotide-binding</keyword>
<keyword id="KW-1185">Reference proteome</keyword>
<name>TTL10_MACFA</name>
<dbReference type="EC" id="6.3.2.-" evidence="2"/>
<dbReference type="EMBL" id="AB168848">
    <property type="protein sequence ID" value="BAE00952.1"/>
    <property type="molecule type" value="mRNA"/>
</dbReference>
<dbReference type="SMR" id="Q4R7H0"/>
<dbReference type="STRING" id="9541.ENSMFAP00000033054"/>
<dbReference type="eggNOG" id="KOG2157">
    <property type="taxonomic scope" value="Eukaryota"/>
</dbReference>
<dbReference type="Proteomes" id="UP000233100">
    <property type="component" value="Unplaced"/>
</dbReference>
<dbReference type="GO" id="GO:0005930">
    <property type="term" value="C:axoneme"/>
    <property type="evidence" value="ECO:0000250"/>
    <property type="project" value="UniProtKB"/>
</dbReference>
<dbReference type="GO" id="GO:0005929">
    <property type="term" value="C:cilium"/>
    <property type="evidence" value="ECO:0000250"/>
    <property type="project" value="UniProtKB"/>
</dbReference>
<dbReference type="GO" id="GO:0005874">
    <property type="term" value="C:microtubule"/>
    <property type="evidence" value="ECO:0007669"/>
    <property type="project" value="UniProtKB-KW"/>
</dbReference>
<dbReference type="GO" id="GO:0015630">
    <property type="term" value="C:microtubule cytoskeleton"/>
    <property type="evidence" value="ECO:0000250"/>
    <property type="project" value="UniProtKB"/>
</dbReference>
<dbReference type="GO" id="GO:0005524">
    <property type="term" value="F:ATP binding"/>
    <property type="evidence" value="ECO:0007669"/>
    <property type="project" value="UniProtKB-KW"/>
</dbReference>
<dbReference type="GO" id="GO:0046872">
    <property type="term" value="F:metal ion binding"/>
    <property type="evidence" value="ECO:0007669"/>
    <property type="project" value="UniProtKB-KW"/>
</dbReference>
<dbReference type="GO" id="GO:0070735">
    <property type="term" value="F:protein-glycine ligase activity"/>
    <property type="evidence" value="ECO:0000250"/>
    <property type="project" value="UniProtKB"/>
</dbReference>
<dbReference type="GO" id="GO:0070737">
    <property type="term" value="F:protein-glycine ligase activity, elongating"/>
    <property type="evidence" value="ECO:0000250"/>
    <property type="project" value="UniProtKB"/>
</dbReference>
<dbReference type="GO" id="GO:0018094">
    <property type="term" value="P:protein polyglycylation"/>
    <property type="evidence" value="ECO:0000250"/>
    <property type="project" value="UniProtKB"/>
</dbReference>
<dbReference type="FunFam" id="3.30.470.20:FF:000046">
    <property type="entry name" value="inactive polyglycylase TTLL10"/>
    <property type="match status" value="1"/>
</dbReference>
<dbReference type="Gene3D" id="3.30.470.20">
    <property type="entry name" value="ATP-grasp fold, B domain"/>
    <property type="match status" value="1"/>
</dbReference>
<dbReference type="InterPro" id="IPR004344">
    <property type="entry name" value="TTL/TTLL_fam"/>
</dbReference>
<dbReference type="InterPro" id="IPR027752">
    <property type="entry name" value="TTLL10"/>
</dbReference>
<dbReference type="PANTHER" id="PTHR46810">
    <property type="entry name" value="INACTIVE POLYGLYCYLASE TTLL10"/>
    <property type="match status" value="1"/>
</dbReference>
<dbReference type="PANTHER" id="PTHR46810:SF1">
    <property type="entry name" value="INACTIVE POLYGLYCYLASE TTLL10"/>
    <property type="match status" value="1"/>
</dbReference>
<dbReference type="Pfam" id="PF03133">
    <property type="entry name" value="TTL"/>
    <property type="match status" value="1"/>
</dbReference>
<dbReference type="SUPFAM" id="SSF56059">
    <property type="entry name" value="Glutathione synthetase ATP-binding domain-like"/>
    <property type="match status" value="1"/>
</dbReference>
<dbReference type="PROSITE" id="PS51221">
    <property type="entry name" value="TTL"/>
    <property type="match status" value="1"/>
</dbReference>
<feature type="chain" id="PRO_0000324521" description="Protein polyglycylase TTLL10">
    <location>
        <begin position="1"/>
        <end position="618"/>
    </location>
</feature>
<feature type="domain" description="TTL" evidence="4">
    <location>
        <begin position="82"/>
        <end position="479"/>
    </location>
</feature>
<feature type="region of interest" description="Disordered" evidence="5">
    <location>
        <begin position="1"/>
        <end position="76"/>
    </location>
</feature>
<feature type="region of interest" description="Disordered" evidence="5">
    <location>
        <begin position="503"/>
        <end position="618"/>
    </location>
</feature>
<feature type="compositionally biased region" description="Low complexity" evidence="5">
    <location>
        <begin position="57"/>
        <end position="74"/>
    </location>
</feature>
<feature type="compositionally biased region" description="Pro residues" evidence="5">
    <location>
        <begin position="539"/>
        <end position="557"/>
    </location>
</feature>
<feature type="compositionally biased region" description="Basic and acidic residues" evidence="5">
    <location>
        <begin position="585"/>
        <end position="594"/>
    </location>
</feature>
<feature type="binding site" evidence="1">
    <location>
        <position position="240"/>
    </location>
    <ligand>
        <name>ATP</name>
        <dbReference type="ChEBI" id="CHEBI:30616"/>
    </ligand>
</feature>
<feature type="binding site" evidence="1">
    <location>
        <begin position="246"/>
        <end position="247"/>
    </location>
    <ligand>
        <name>ATP</name>
        <dbReference type="ChEBI" id="CHEBI:30616"/>
    </ligand>
</feature>
<feature type="binding site" evidence="1">
    <location>
        <position position="246"/>
    </location>
    <ligand>
        <name>a protein</name>
        <dbReference type="ChEBI" id="CHEBI:16541"/>
    </ligand>
    <ligandPart>
        <name>L-glutamate residue</name>
        <dbReference type="ChEBI" id="CHEBI:29973"/>
        <note>L-glutamate acceptor residue in protein target</note>
    </ligandPart>
</feature>
<feature type="binding site" evidence="3">
    <location>
        <begin position="289"/>
        <end position="292"/>
    </location>
    <ligand>
        <name>ATP</name>
        <dbReference type="ChEBI" id="CHEBI:30616"/>
    </ligand>
</feature>
<feature type="binding site" evidence="3">
    <location>
        <begin position="302"/>
        <end position="304"/>
    </location>
    <ligand>
        <name>ATP</name>
        <dbReference type="ChEBI" id="CHEBI:30616"/>
    </ligand>
</feature>
<feature type="binding site" evidence="1">
    <location>
        <begin position="345"/>
        <end position="346"/>
    </location>
    <ligand>
        <name>ATP</name>
        <dbReference type="ChEBI" id="CHEBI:30616"/>
    </ligand>
</feature>
<feature type="binding site" evidence="1">
    <location>
        <position position="425"/>
    </location>
    <ligand>
        <name>Mg(2+)</name>
        <dbReference type="ChEBI" id="CHEBI:18420"/>
        <label>1</label>
    </ligand>
</feature>
<feature type="binding site" evidence="1">
    <location>
        <position position="438"/>
    </location>
    <ligand>
        <name>Mg(2+)</name>
        <dbReference type="ChEBI" id="CHEBI:18420"/>
        <label>1</label>
    </ligand>
</feature>
<feature type="binding site" evidence="1">
    <location>
        <position position="438"/>
    </location>
    <ligand>
        <name>Mg(2+)</name>
        <dbReference type="ChEBI" id="CHEBI:18420"/>
        <label>2</label>
    </ligand>
</feature>
<feature type="binding site" evidence="1">
    <location>
        <position position="440"/>
    </location>
    <ligand>
        <name>Mg(2+)</name>
        <dbReference type="ChEBI" id="CHEBI:18420"/>
        <label>2</label>
    </ligand>
</feature>
<feature type="site" description="Essential for specifying elongation versus initiation step of the polyglycylase activity" evidence="1">
    <location>
        <position position="246"/>
    </location>
</feature>
<accession>Q4R7H0</accession>
<evidence type="ECO:0000250" key="1">
    <source>
        <dbReference type="UniProtKB" id="A4Q9E8"/>
    </source>
</evidence>
<evidence type="ECO:0000250" key="2">
    <source>
        <dbReference type="UniProtKB" id="A4Q9F3"/>
    </source>
</evidence>
<evidence type="ECO:0000250" key="3">
    <source>
        <dbReference type="UniProtKB" id="Q6ZT98"/>
    </source>
</evidence>
<evidence type="ECO:0000255" key="4">
    <source>
        <dbReference type="PROSITE-ProRule" id="PRU00568"/>
    </source>
</evidence>
<evidence type="ECO:0000256" key="5">
    <source>
        <dbReference type="SAM" id="MobiDB-lite"/>
    </source>
</evidence>
<protein>
    <recommendedName>
        <fullName evidence="2">Protein polyglycylase TTLL10</fullName>
        <ecNumber evidence="2">6.3.2.-</ecNumber>
    </recommendedName>
    <alternativeName>
        <fullName>Tubulin--tyrosine ligase-like protein 10</fullName>
    </alternativeName>
</protein>
<comment type="function">
    <text evidence="2">Polyglycylase which modifies both tubulin and non-tubulin proteins, generating polyglycine side chains of variable lengths on the gamma-carboxyl groups of specific glutamate residues of target proteins. Involved in the elongation step rather than the initiation step of the polyglycylation reaction. Polyglycylates alpha-tubulin and beta-tubulin. Polyglycylates non-tubulin proteins such as nucleosome assembly protein NAP1.</text>
</comment>
<comment type="catalytic activity">
    <molecule>Protein polyglycylase TTLL10</molecule>
    <reaction evidence="2">
        <text>(glycyl)(n)-glycyl-L-glutamyl-[protein] + glycine + ATP = (glycyl)(n+1)-glycyl-L-glutamyl-[protein] + ADP + phosphate + H(+)</text>
        <dbReference type="Rhea" id="RHEA:67184"/>
        <dbReference type="Rhea" id="RHEA-COMP:17208"/>
        <dbReference type="Rhea" id="RHEA-COMP:17209"/>
        <dbReference type="ChEBI" id="CHEBI:15378"/>
        <dbReference type="ChEBI" id="CHEBI:30616"/>
        <dbReference type="ChEBI" id="CHEBI:43474"/>
        <dbReference type="ChEBI" id="CHEBI:57305"/>
        <dbReference type="ChEBI" id="CHEBI:167891"/>
        <dbReference type="ChEBI" id="CHEBI:456216"/>
    </reaction>
    <physiologicalReaction direction="left-to-right" evidence="2">
        <dbReference type="Rhea" id="RHEA:67185"/>
    </physiologicalReaction>
</comment>
<comment type="cofactor">
    <cofactor evidence="1">
        <name>Mg(2+)</name>
        <dbReference type="ChEBI" id="CHEBI:18420"/>
    </cofactor>
</comment>
<comment type="subcellular location">
    <subcellularLocation>
        <location evidence="2">Cytoplasm</location>
        <location evidence="2">Cytoskeleton</location>
    </subcellularLocation>
    <subcellularLocation>
        <location evidence="2">Cell projection</location>
        <location evidence="2">Cilium</location>
    </subcellularLocation>
    <subcellularLocation>
        <location evidence="2">Cytoplasm</location>
        <location evidence="2">Cytoskeleton</location>
        <location evidence="2">Cilium axoneme</location>
    </subcellularLocation>
</comment>
<comment type="domain">
    <text evidence="1">Gln-246 is the main determinant for regioselectivity, which segregates between initiases and elongases in all tubulin--tyrosine ligase family. A glutamine residue at this position is found in elongases TTLL6, TTLL9, TTLL11, TTLL13, TTLL10 and favors glutamate-chain elongation, whereas an arginine residue is found in initiases TTLL2, TTLL4, TTLL5, TTLL3, TTLL8 and favors initiation.</text>
</comment>
<sequence>MGSSQEEGLPCQPSQPDHDTGGHGGPDLEGAGRVSTTPGPPGLLTSHPPADSDDTDATGPPAALLEGLLLGDGKPSPHSTRPGPFFYIGGNNGAAIISSYCKSKGWRRIQDSRREDYVLKWCEVKSRDSYGSFREGEQLLYQLPNNKLLTTKIGLLSTLRGRAWAMSKASKAPGGTQARLGKDATAPTLEDLPWTSPGHLRPQRVLRMEEFFPETYRLDLKHEREAFFTLFDETQIWICKPTASNQGKGIFLLRNQEEVAALQAKTRRAEDDPIHHKSPFRGPQARVVQRYIQNPLLLDGRKFDVRSYLLIACTTPYMIFFSHGYARLTLSLYDPHSSDLSGHLTNQFMQKKSPLYVLLKEDTVWSMERLNRYINTTFWKARGLPKDWVFTTLTKRMQQIMAHCFLAAKSKLECKLGYFDLIGCDFLIDDNFKVWLLEMNSNPALHTNCEVLKEVIPGVVIETLDLALETFQKSLRGQKMLPLLSQRRFVLLHNGEADVWPRLGGSCSLRRRLPPPTRQAKSSGPPTPRAPDQPGTRRPVPPPLAPQRPQLPGPSPDPDSAHDGQPQAPGTGDRHPEQEPSPGTAKEEREEPENARPWGGHPRPTPHAPATLPAFRDL</sequence>
<proteinExistence type="evidence at transcript level"/>
<reference key="1">
    <citation type="submission" date="2005-06" db="EMBL/GenBank/DDBJ databases">
        <title>DNA sequences of macaque genes expressed in brain or testis and its evolutionary implications.</title>
        <authorList>
            <consortium name="International consortium for macaque cDNA sequencing and analysis"/>
        </authorList>
    </citation>
    <scope>NUCLEOTIDE SEQUENCE [LARGE SCALE MRNA]</scope>
    <source>
        <tissue>Testis</tissue>
    </source>
</reference>
<organism>
    <name type="scientific">Macaca fascicularis</name>
    <name type="common">Crab-eating macaque</name>
    <name type="synonym">Cynomolgus monkey</name>
    <dbReference type="NCBI Taxonomy" id="9541"/>
    <lineage>
        <taxon>Eukaryota</taxon>
        <taxon>Metazoa</taxon>
        <taxon>Chordata</taxon>
        <taxon>Craniata</taxon>
        <taxon>Vertebrata</taxon>
        <taxon>Euteleostomi</taxon>
        <taxon>Mammalia</taxon>
        <taxon>Eutheria</taxon>
        <taxon>Euarchontoglires</taxon>
        <taxon>Primates</taxon>
        <taxon>Haplorrhini</taxon>
        <taxon>Catarrhini</taxon>
        <taxon>Cercopithecidae</taxon>
        <taxon>Cercopithecinae</taxon>
        <taxon>Macaca</taxon>
    </lineage>
</organism>
<gene>
    <name type="primary">TTLL10</name>
    <name type="ORF">QtsA-15349</name>
</gene>